<evidence type="ECO:0000250" key="1"/>
<evidence type="ECO:0000269" key="2">
    <source>
    </source>
</evidence>
<evidence type="ECO:0000305" key="3"/>
<evidence type="ECO:0000305" key="4">
    <source>
    </source>
</evidence>
<evidence type="ECO:0007829" key="5">
    <source>
        <dbReference type="PDB" id="7AQR"/>
    </source>
</evidence>
<evidence type="ECO:0007829" key="6">
    <source>
        <dbReference type="PDB" id="8BEE"/>
    </source>
</evidence>
<keyword id="KW-0002">3D-structure</keyword>
<keyword id="KW-0249">Electron transport</keyword>
<keyword id="KW-0274">FAD</keyword>
<keyword id="KW-0285">Flavoprotein</keyword>
<keyword id="KW-0496">Mitochondrion</keyword>
<keyword id="KW-1185">Reference proteome</keyword>
<keyword id="KW-0679">Respiratory chain</keyword>
<keyword id="KW-0809">Transit peptide</keyword>
<keyword id="KW-0813">Transport</keyword>
<organism>
    <name type="scientific">Arabidopsis thaliana</name>
    <name type="common">Mouse-ear cress</name>
    <dbReference type="NCBI Taxonomy" id="3702"/>
    <lineage>
        <taxon>Eukaryota</taxon>
        <taxon>Viridiplantae</taxon>
        <taxon>Streptophyta</taxon>
        <taxon>Embryophyta</taxon>
        <taxon>Tracheophyta</taxon>
        <taxon>Spermatophyta</taxon>
        <taxon>Magnoliopsida</taxon>
        <taxon>eudicotyledons</taxon>
        <taxon>Gunneridae</taxon>
        <taxon>Pentapetalae</taxon>
        <taxon>rosids</taxon>
        <taxon>malvids</taxon>
        <taxon>Brassicales</taxon>
        <taxon>Brassicaceae</taxon>
        <taxon>Camelineae</taxon>
        <taxon>Arabidopsis</taxon>
    </lineage>
</organism>
<proteinExistence type="evidence at protein level"/>
<dbReference type="EMBL" id="AC006569">
    <property type="protein sequence ID" value="AAD21752.2"/>
    <property type="molecule type" value="Genomic_DNA"/>
</dbReference>
<dbReference type="EMBL" id="CP002685">
    <property type="protein sequence ID" value="AEC06997.1"/>
    <property type="molecule type" value="Genomic_DNA"/>
</dbReference>
<dbReference type="EMBL" id="AY035040">
    <property type="protein sequence ID" value="AAK59545.1"/>
    <property type="molecule type" value="mRNA"/>
</dbReference>
<dbReference type="EMBL" id="AY051072">
    <property type="protein sequence ID" value="AAK93749.1"/>
    <property type="molecule type" value="mRNA"/>
</dbReference>
<dbReference type="EMBL" id="AY600552">
    <property type="protein sequence ID" value="AAT68351.1"/>
    <property type="molecule type" value="mRNA"/>
</dbReference>
<dbReference type="EMBL" id="AY924745">
    <property type="protein sequence ID" value="AAX23820.1"/>
    <property type="molecule type" value="mRNA"/>
</dbReference>
<dbReference type="EMBL" id="AK317648">
    <property type="protein sequence ID" value="BAH20309.1"/>
    <property type="molecule type" value="mRNA"/>
</dbReference>
<dbReference type="PIR" id="C84588">
    <property type="entry name" value="C84588"/>
</dbReference>
<dbReference type="RefSeq" id="NP_565469.1">
    <property type="nucleotide sequence ID" value="NM_127595.4"/>
</dbReference>
<dbReference type="PDB" id="7A23">
    <property type="method" value="EM"/>
    <property type="resolution" value="3.70 A"/>
    <property type="chains" value="T=1-402"/>
</dbReference>
<dbReference type="PDB" id="7A24">
    <property type="method" value="EM"/>
    <property type="resolution" value="3.80 A"/>
    <property type="chains" value="T=1-402"/>
</dbReference>
<dbReference type="PDB" id="7AQR">
    <property type="method" value="EM"/>
    <property type="resolution" value="2.91 A"/>
    <property type="chains" value="P=1-402"/>
</dbReference>
<dbReference type="PDB" id="7AR7">
    <property type="method" value="EM"/>
    <property type="resolution" value="3.72 A"/>
    <property type="chains" value="P=52-382"/>
</dbReference>
<dbReference type="PDB" id="7AR8">
    <property type="method" value="EM"/>
    <property type="resolution" value="3.53 A"/>
    <property type="chains" value="P=1-402"/>
</dbReference>
<dbReference type="PDB" id="7ARB">
    <property type="method" value="EM"/>
    <property type="resolution" value="3.41 A"/>
    <property type="chains" value="P=1-402"/>
</dbReference>
<dbReference type="PDB" id="8BEE">
    <property type="method" value="EM"/>
    <property type="resolution" value="2.04 A"/>
    <property type="chains" value="P=1-402"/>
</dbReference>
<dbReference type="PDB" id="8BPX">
    <property type="method" value="EM"/>
    <property type="resolution" value="2.09 A"/>
    <property type="chains" value="P=1-402"/>
</dbReference>
<dbReference type="PDB" id="8BQ5">
    <property type="method" value="EM"/>
    <property type="resolution" value="2.73 A"/>
    <property type="chains" value="P=1-402"/>
</dbReference>
<dbReference type="PDB" id="8BQ6">
    <property type="method" value="EM"/>
    <property type="resolution" value="2.80 A"/>
    <property type="chains" value="P=1-402"/>
</dbReference>
<dbReference type="PDBsum" id="7A23"/>
<dbReference type="PDBsum" id="7A24"/>
<dbReference type="PDBsum" id="7AQR"/>
<dbReference type="PDBsum" id="7AR7"/>
<dbReference type="PDBsum" id="7AR8"/>
<dbReference type="PDBsum" id="7ARB"/>
<dbReference type="PDBsum" id="8BEE"/>
<dbReference type="PDBsum" id="8BPX"/>
<dbReference type="PDBsum" id="8BQ5"/>
<dbReference type="PDBsum" id="8BQ6"/>
<dbReference type="EMDB" id="EMD-11873"/>
<dbReference type="EMDB" id="EMD-11875"/>
<dbReference type="EMDB" id="EMD-11876"/>
<dbReference type="EMDB" id="EMD-11878"/>
<dbReference type="EMDB" id="EMD-15999"/>
<dbReference type="EMDB" id="EMD-16168"/>
<dbReference type="EMDB" id="EMD-16171"/>
<dbReference type="EMDB" id="EMD-16172"/>
<dbReference type="SMR" id="Q9SK66"/>
<dbReference type="BioGRID" id="1908">
    <property type="interactions" value="10"/>
</dbReference>
<dbReference type="FunCoup" id="Q9SK66">
    <property type="interactions" value="4300"/>
</dbReference>
<dbReference type="IntAct" id="Q9SK66">
    <property type="interactions" value="2"/>
</dbReference>
<dbReference type="STRING" id="3702.Q9SK66"/>
<dbReference type="TCDB" id="3.D.1.6.3">
    <property type="family name" value="the h+ or na+-translocating nadh dehydrogenase (ndh) family"/>
</dbReference>
<dbReference type="PaxDb" id="3702-AT2G20360.1"/>
<dbReference type="ProteomicsDB" id="251303"/>
<dbReference type="EnsemblPlants" id="AT2G20360.1">
    <property type="protein sequence ID" value="AT2G20360.1"/>
    <property type="gene ID" value="AT2G20360"/>
</dbReference>
<dbReference type="GeneID" id="816555"/>
<dbReference type="Gramene" id="AT2G20360.1">
    <property type="protein sequence ID" value="AT2G20360.1"/>
    <property type="gene ID" value="AT2G20360"/>
</dbReference>
<dbReference type="KEGG" id="ath:AT2G20360"/>
<dbReference type="Araport" id="AT2G20360"/>
<dbReference type="TAIR" id="AT2G20360"/>
<dbReference type="eggNOG" id="KOG2865">
    <property type="taxonomic scope" value="Eukaryota"/>
</dbReference>
<dbReference type="HOGENOM" id="CLU_007383_6_4_1"/>
<dbReference type="InParanoid" id="Q9SK66"/>
<dbReference type="OMA" id="PEDQFTN"/>
<dbReference type="OrthoDB" id="275457at2759"/>
<dbReference type="PhylomeDB" id="Q9SK66"/>
<dbReference type="BioCyc" id="ARA:AT2G20360-MONOMER"/>
<dbReference type="BioCyc" id="MetaCyc:AT2G20360-MONOMER"/>
<dbReference type="CD-CODE" id="4299E36E">
    <property type="entry name" value="Nucleolus"/>
</dbReference>
<dbReference type="PRO" id="PR:Q9SK66"/>
<dbReference type="Proteomes" id="UP000006548">
    <property type="component" value="Chromosome 2"/>
</dbReference>
<dbReference type="ExpressionAtlas" id="Q9SK66">
    <property type="expression patterns" value="baseline and differential"/>
</dbReference>
<dbReference type="GO" id="GO:0005759">
    <property type="term" value="C:mitochondrial matrix"/>
    <property type="evidence" value="ECO:0007669"/>
    <property type="project" value="UniProtKB-SubCell"/>
</dbReference>
<dbReference type="GO" id="GO:0005739">
    <property type="term" value="C:mitochondrion"/>
    <property type="evidence" value="ECO:0000314"/>
    <property type="project" value="TAIR"/>
</dbReference>
<dbReference type="CDD" id="cd05271">
    <property type="entry name" value="NDUFA9_like_SDR_a"/>
    <property type="match status" value="1"/>
</dbReference>
<dbReference type="FunFam" id="3.40.50.720:FF:000326">
    <property type="entry name" value="NADH-ubiquinone oxidoreductase 39 kD subunit, putative"/>
    <property type="match status" value="1"/>
</dbReference>
<dbReference type="Gene3D" id="3.40.50.720">
    <property type="entry name" value="NAD(P)-binding Rossmann-like Domain"/>
    <property type="match status" value="1"/>
</dbReference>
<dbReference type="InterPro" id="IPR051207">
    <property type="entry name" value="ComplexI_NDUFA9_subunit"/>
</dbReference>
<dbReference type="InterPro" id="IPR001509">
    <property type="entry name" value="Epimerase_deHydtase"/>
</dbReference>
<dbReference type="InterPro" id="IPR036291">
    <property type="entry name" value="NAD(P)-bd_dom_sf"/>
</dbReference>
<dbReference type="PANTHER" id="PTHR12126:SF11">
    <property type="entry name" value="NADH DEHYDROGENASE [UBIQUINONE] 1 ALPHA SUBCOMPLEX SUBUNIT 9, MITOCHONDRIAL"/>
    <property type="match status" value="1"/>
</dbReference>
<dbReference type="PANTHER" id="PTHR12126">
    <property type="entry name" value="NADH-UBIQUINONE OXIDOREDUCTASE 39 KDA SUBUNIT-RELATED"/>
    <property type="match status" value="1"/>
</dbReference>
<dbReference type="Pfam" id="PF01370">
    <property type="entry name" value="Epimerase"/>
    <property type="match status" value="1"/>
</dbReference>
<dbReference type="SUPFAM" id="SSF51735">
    <property type="entry name" value="NAD(P)-binding Rossmann-fold domains"/>
    <property type="match status" value="1"/>
</dbReference>
<comment type="function">
    <text evidence="1">Accessory subunit of the mitochondrial membrane respiratory chain NADH dehydrogenase (Complex I), that is believed not to be involved in catalysis. Complex I functions in the transfer of electrons from NADH to the respiratory chain. The immediate electron acceptor for the enzyme is believed to be ubiquinone (By similarity).</text>
</comment>
<comment type="cofactor">
    <cofactor evidence="1">
        <name>FAD</name>
        <dbReference type="ChEBI" id="CHEBI:57692"/>
    </cofactor>
    <text evidence="1">Binds 1 FAD per subunit.</text>
</comment>
<comment type="subunit">
    <text>Complex I is composed of at least 49 different subunits. This a component of the hydrophobic protein fraction.</text>
</comment>
<comment type="subcellular location">
    <subcellularLocation>
        <location evidence="4">Mitochondrion matrix</location>
    </subcellularLocation>
</comment>
<comment type="similarity">
    <text evidence="3">Belongs to the complex I NDUFA9 subunit family.</text>
</comment>
<sequence>MQVVSRRLVQRPLVGGASIYSSSSLRSLYGVSNHLNGTDNCRYSSSLATKGVGHLARKGTGGRSSVSGIVATVFGATGFLGRYLVQQLAKMGSQVLVPFRGSEDSPRHLKLMGDLGQVVPMKFDPRDEDSIKAVMAKANVVINLIGREYETRNFSFEDANHHIAEKLALVAKEHGGIMRYIQVSCLGASVSSPSRMLRAKAAAEEAVLNALPEATIMRPATMIGTEDRILNPWSMFVKKYGFLPLIGGGTTKFQPVYVVDVAAAIVAALKDDGSSMGKTYELGGPDVFTTHELAEIMYDMIREWPRYVKLPFPIAKAMAAPRDFMVNKVPFPLPSPQIFNLDQINALTTDTLVSDNALKFQDLDLVPHKLKGYPVEFLIQYRKGGPNFGSTVSEKIPTDFYP</sequence>
<accession>Q9SK66</accession>
<accession>B9DHU2</accession>
<accession>Q93VY5</accession>
<protein>
    <recommendedName>
        <fullName>NADH dehydrogenase [ubiquinone] 1 alpha subcomplex subunit 9, mitochondrial</fullName>
    </recommendedName>
</protein>
<name>NDUA9_ARATH</name>
<gene>
    <name type="ordered locus">At2g20360</name>
    <name type="ORF">F11A3.9</name>
</gene>
<feature type="transit peptide" description="Mitochondrion" evidence="2">
    <location>
        <begin position="1"/>
        <end position="43"/>
    </location>
</feature>
<feature type="chain" id="PRO_0000410934" description="NADH dehydrogenase [ubiquinone] 1 alpha subcomplex subunit 9, mitochondrial">
    <location>
        <begin position="44"/>
        <end position="402"/>
    </location>
</feature>
<feature type="strand" evidence="5">
    <location>
        <begin position="59"/>
        <end position="62"/>
    </location>
</feature>
<feature type="strand" evidence="6">
    <location>
        <begin position="70"/>
        <end position="74"/>
    </location>
</feature>
<feature type="turn" evidence="6">
    <location>
        <begin position="75"/>
        <end position="77"/>
    </location>
</feature>
<feature type="helix" evidence="6">
    <location>
        <begin position="79"/>
        <end position="90"/>
    </location>
</feature>
<feature type="strand" evidence="6">
    <location>
        <begin position="94"/>
        <end position="101"/>
    </location>
</feature>
<feature type="turn" evidence="6">
    <location>
        <begin position="103"/>
        <end position="106"/>
    </location>
</feature>
<feature type="helix" evidence="6">
    <location>
        <begin position="107"/>
        <end position="109"/>
    </location>
</feature>
<feature type="strand" evidence="6">
    <location>
        <begin position="112"/>
        <end position="114"/>
    </location>
</feature>
<feature type="turn" evidence="6">
    <location>
        <begin position="115"/>
        <end position="117"/>
    </location>
</feature>
<feature type="strand" evidence="6">
    <location>
        <begin position="118"/>
        <end position="122"/>
    </location>
</feature>
<feature type="helix" evidence="6">
    <location>
        <begin position="128"/>
        <end position="135"/>
    </location>
</feature>
<feature type="strand" evidence="6">
    <location>
        <begin position="139"/>
        <end position="143"/>
    </location>
</feature>
<feature type="strand" evidence="5">
    <location>
        <begin position="152"/>
        <end position="154"/>
    </location>
</feature>
<feature type="helix" evidence="6">
    <location>
        <begin position="156"/>
        <end position="160"/>
    </location>
</feature>
<feature type="helix" evidence="6">
    <location>
        <begin position="162"/>
        <end position="174"/>
    </location>
</feature>
<feature type="strand" evidence="6">
    <location>
        <begin position="178"/>
        <end position="183"/>
    </location>
</feature>
<feature type="helix" evidence="6">
    <location>
        <begin position="195"/>
        <end position="210"/>
    </location>
</feature>
<feature type="strand" evidence="6">
    <location>
        <begin position="215"/>
        <end position="219"/>
    </location>
</feature>
<feature type="strand" evidence="6">
    <location>
        <begin position="221"/>
        <end position="224"/>
    </location>
</feature>
<feature type="helix" evidence="6">
    <location>
        <begin position="230"/>
        <end position="240"/>
    </location>
</feature>
<feature type="strand" evidence="6">
    <location>
        <begin position="243"/>
        <end position="245"/>
    </location>
</feature>
<feature type="helix" evidence="6">
    <location>
        <begin position="258"/>
        <end position="270"/>
    </location>
</feature>
<feature type="strand" evidence="6">
    <location>
        <begin position="271"/>
        <end position="273"/>
    </location>
</feature>
<feature type="turn" evidence="6">
    <location>
        <begin position="274"/>
        <end position="277"/>
    </location>
</feature>
<feature type="strand" evidence="6">
    <location>
        <begin position="279"/>
        <end position="282"/>
    </location>
</feature>
<feature type="helix" evidence="6">
    <location>
        <begin position="290"/>
        <end position="301"/>
    </location>
</feature>
<feature type="strand" evidence="6">
    <location>
        <begin position="307"/>
        <end position="309"/>
    </location>
</feature>
<feature type="helix" evidence="6">
    <location>
        <begin position="312"/>
        <end position="325"/>
    </location>
</feature>
<feature type="turn" evidence="6">
    <location>
        <begin position="326"/>
        <end position="328"/>
    </location>
</feature>
<feature type="strand" evidence="6">
    <location>
        <begin position="329"/>
        <end position="331"/>
    </location>
</feature>
<feature type="helix" evidence="6">
    <location>
        <begin position="341"/>
        <end position="346"/>
    </location>
</feature>
<feature type="turn" evidence="6">
    <location>
        <begin position="361"/>
        <end position="364"/>
    </location>
</feature>
<feature type="turn" evidence="6">
    <location>
        <begin position="371"/>
        <end position="375"/>
    </location>
</feature>
<feature type="helix" evidence="6">
    <location>
        <begin position="376"/>
        <end position="381"/>
    </location>
</feature>
<reference key="1">
    <citation type="journal article" date="1999" name="Nature">
        <title>Sequence and analysis of chromosome 2 of the plant Arabidopsis thaliana.</title>
        <authorList>
            <person name="Lin X."/>
            <person name="Kaul S."/>
            <person name="Rounsley S.D."/>
            <person name="Shea T.P."/>
            <person name="Benito M.-I."/>
            <person name="Town C.D."/>
            <person name="Fujii C.Y."/>
            <person name="Mason T.M."/>
            <person name="Bowman C.L."/>
            <person name="Barnstead M.E."/>
            <person name="Feldblyum T.V."/>
            <person name="Buell C.R."/>
            <person name="Ketchum K.A."/>
            <person name="Lee J.J."/>
            <person name="Ronning C.M."/>
            <person name="Koo H.L."/>
            <person name="Moffat K.S."/>
            <person name="Cronin L.A."/>
            <person name="Shen M."/>
            <person name="Pai G."/>
            <person name="Van Aken S."/>
            <person name="Umayam L."/>
            <person name="Tallon L.J."/>
            <person name="Gill J.E."/>
            <person name="Adams M.D."/>
            <person name="Carrera A.J."/>
            <person name="Creasy T.H."/>
            <person name="Goodman H.M."/>
            <person name="Somerville C.R."/>
            <person name="Copenhaver G.P."/>
            <person name="Preuss D."/>
            <person name="Nierman W.C."/>
            <person name="White O."/>
            <person name="Eisen J.A."/>
            <person name="Salzberg S.L."/>
            <person name="Fraser C.M."/>
            <person name="Venter J.C."/>
        </authorList>
    </citation>
    <scope>NUCLEOTIDE SEQUENCE [LARGE SCALE GENOMIC DNA]</scope>
    <source>
        <strain>cv. Columbia</strain>
    </source>
</reference>
<reference key="2">
    <citation type="journal article" date="2017" name="Plant J.">
        <title>Araport11: a complete reannotation of the Arabidopsis thaliana reference genome.</title>
        <authorList>
            <person name="Cheng C.Y."/>
            <person name="Krishnakumar V."/>
            <person name="Chan A.P."/>
            <person name="Thibaud-Nissen F."/>
            <person name="Schobel S."/>
            <person name="Town C.D."/>
        </authorList>
    </citation>
    <scope>GENOME REANNOTATION</scope>
    <source>
        <strain>cv. Columbia</strain>
    </source>
</reference>
<reference key="3">
    <citation type="journal article" date="2003" name="Science">
        <title>Empirical analysis of transcriptional activity in the Arabidopsis genome.</title>
        <authorList>
            <person name="Yamada K."/>
            <person name="Lim J."/>
            <person name="Dale J.M."/>
            <person name="Chen H."/>
            <person name="Shinn P."/>
            <person name="Palm C.J."/>
            <person name="Southwick A.M."/>
            <person name="Wu H.C."/>
            <person name="Kim C.J."/>
            <person name="Nguyen M."/>
            <person name="Pham P.K."/>
            <person name="Cheuk R.F."/>
            <person name="Karlin-Newmann G."/>
            <person name="Liu S.X."/>
            <person name="Lam B."/>
            <person name="Sakano H."/>
            <person name="Wu T."/>
            <person name="Yu G."/>
            <person name="Miranda M."/>
            <person name="Quach H.L."/>
            <person name="Tripp M."/>
            <person name="Chang C.H."/>
            <person name="Lee J.M."/>
            <person name="Toriumi M.J."/>
            <person name="Chan M.M."/>
            <person name="Tang C.C."/>
            <person name="Onodera C.S."/>
            <person name="Deng J.M."/>
            <person name="Akiyama K."/>
            <person name="Ansari Y."/>
            <person name="Arakawa T."/>
            <person name="Banh J."/>
            <person name="Banno F."/>
            <person name="Bowser L."/>
            <person name="Brooks S.Y."/>
            <person name="Carninci P."/>
            <person name="Chao Q."/>
            <person name="Choy N."/>
            <person name="Enju A."/>
            <person name="Goldsmith A.D."/>
            <person name="Gurjal M."/>
            <person name="Hansen N.F."/>
            <person name="Hayashizaki Y."/>
            <person name="Johnson-Hopson C."/>
            <person name="Hsuan V.W."/>
            <person name="Iida K."/>
            <person name="Karnes M."/>
            <person name="Khan S."/>
            <person name="Koesema E."/>
            <person name="Ishida J."/>
            <person name="Jiang P.X."/>
            <person name="Jones T."/>
            <person name="Kawai J."/>
            <person name="Kamiya A."/>
            <person name="Meyers C."/>
            <person name="Nakajima M."/>
            <person name="Narusaka M."/>
            <person name="Seki M."/>
            <person name="Sakurai T."/>
            <person name="Satou M."/>
            <person name="Tamse R."/>
            <person name="Vaysberg M."/>
            <person name="Wallender E.K."/>
            <person name="Wong C."/>
            <person name="Yamamura Y."/>
            <person name="Yuan S."/>
            <person name="Shinozaki K."/>
            <person name="Davis R.W."/>
            <person name="Theologis A."/>
            <person name="Ecker J.R."/>
        </authorList>
    </citation>
    <scope>NUCLEOTIDE SEQUENCE [LARGE SCALE MRNA]</scope>
    <source>
        <strain>cv. Columbia</strain>
    </source>
</reference>
<reference key="4">
    <citation type="submission" date="2004-04" db="EMBL/GenBank/DDBJ databases">
        <title>Reconstruction of cDNA sequences for hypothetical genes in Arabidopsis thaliana from 5' and 3' RACE products.</title>
        <authorList>
            <person name="Xiao Y.-L."/>
            <person name="Underwood B.A."/>
            <person name="Moskal W.A. Jr."/>
            <person name="Torian U."/>
            <person name="Redman J.C."/>
            <person name="Wu H.C."/>
            <person name="Utterback T."/>
            <person name="Town C.D."/>
        </authorList>
    </citation>
    <scope>NUCLEOTIDE SEQUENCE [LARGE SCALE MRNA]</scope>
    <source>
        <strain>cv. Columbia</strain>
    </source>
</reference>
<reference key="5">
    <citation type="submission" date="2005-02" db="EMBL/GenBank/DDBJ databases">
        <authorList>
            <person name="Underwood B.A."/>
            <person name="Xiao Y.-L."/>
            <person name="Moskal W.A. Jr."/>
            <person name="Monaghan E.L."/>
            <person name="Wang W."/>
            <person name="Redman J.C."/>
            <person name="Wu H.C."/>
            <person name="Utterback T."/>
            <person name="Town C.D."/>
        </authorList>
    </citation>
    <scope>NUCLEOTIDE SEQUENCE [LARGE SCALE MRNA]</scope>
    <source>
        <strain>cv. Columbia</strain>
    </source>
</reference>
<reference key="6">
    <citation type="journal article" date="2009" name="DNA Res.">
        <title>Analysis of multiple occurrences of alternative splicing events in Arabidopsis thaliana using novel sequenced full-length cDNAs.</title>
        <authorList>
            <person name="Iida K."/>
            <person name="Fukami-Kobayashi K."/>
            <person name="Toyoda A."/>
            <person name="Sakaki Y."/>
            <person name="Kobayashi M."/>
            <person name="Seki M."/>
            <person name="Shinozaki K."/>
        </authorList>
    </citation>
    <scope>NUCLEOTIDE SEQUENCE [LARGE SCALE MRNA] OF 68-402</scope>
    <source>
        <strain>cv. Columbia</strain>
        <tissue>Flower</tissue>
        <tissue>Silique</tissue>
    </source>
</reference>
<reference key="7">
    <citation type="journal article" date="2009" name="J. Proteomics">
        <title>Phosphoproteomic analysis of nuclei-enriched fractions from Arabidopsis thaliana.</title>
        <authorList>
            <person name="Jones A.M.E."/>
            <person name="MacLean D."/>
            <person name="Studholme D.J."/>
            <person name="Serna-Sanz A."/>
            <person name="Andreasson E."/>
            <person name="Rathjen J.P."/>
            <person name="Peck S.C."/>
        </authorList>
    </citation>
    <scope>IDENTIFICATION BY MASS SPECTROMETRY [LARGE SCALE ANALYSIS]</scope>
    <source>
        <strain>cv. Columbia</strain>
    </source>
</reference>
<reference key="8">
    <citation type="journal article" date="2015" name="J. Exp. Bot.">
        <title>Identification of cleavage sites and substrate proteins for two mitochondrial intermediate peptidases in Arabidopsis thaliana.</title>
        <authorList>
            <person name="Carrie C."/>
            <person name="Venne A.S."/>
            <person name="Zahedi R.P."/>
            <person name="Soll J."/>
        </authorList>
    </citation>
    <scope>IDENTIFICATION BY MASS SPECTROMETRY</scope>
    <scope>CLEAVAGE OF TRANSIT PEPTIDE AFTER TYR-43</scope>
</reference>